<dbReference type="EC" id="4.6.1.12" evidence="1"/>
<dbReference type="EMBL" id="FM178379">
    <property type="protein sequence ID" value="CAQ80195.1"/>
    <property type="molecule type" value="Genomic_DNA"/>
</dbReference>
<dbReference type="RefSeq" id="WP_012550983.1">
    <property type="nucleotide sequence ID" value="NC_011312.1"/>
</dbReference>
<dbReference type="SMR" id="B6EKL5"/>
<dbReference type="KEGG" id="vsa:VSAL_I2511"/>
<dbReference type="eggNOG" id="COG0245">
    <property type="taxonomic scope" value="Bacteria"/>
</dbReference>
<dbReference type="HOGENOM" id="CLU_084630_2_0_6"/>
<dbReference type="UniPathway" id="UPA00056">
    <property type="reaction ID" value="UER00095"/>
</dbReference>
<dbReference type="Proteomes" id="UP000001730">
    <property type="component" value="Chromosome 1"/>
</dbReference>
<dbReference type="GO" id="GO:0008685">
    <property type="term" value="F:2-C-methyl-D-erythritol 2,4-cyclodiphosphate synthase activity"/>
    <property type="evidence" value="ECO:0007669"/>
    <property type="project" value="UniProtKB-UniRule"/>
</dbReference>
<dbReference type="GO" id="GO:0046872">
    <property type="term" value="F:metal ion binding"/>
    <property type="evidence" value="ECO:0007669"/>
    <property type="project" value="UniProtKB-KW"/>
</dbReference>
<dbReference type="GO" id="GO:0019288">
    <property type="term" value="P:isopentenyl diphosphate biosynthetic process, methylerythritol 4-phosphate pathway"/>
    <property type="evidence" value="ECO:0007669"/>
    <property type="project" value="UniProtKB-UniRule"/>
</dbReference>
<dbReference type="GO" id="GO:0016114">
    <property type="term" value="P:terpenoid biosynthetic process"/>
    <property type="evidence" value="ECO:0007669"/>
    <property type="project" value="InterPro"/>
</dbReference>
<dbReference type="CDD" id="cd00554">
    <property type="entry name" value="MECDP_synthase"/>
    <property type="match status" value="1"/>
</dbReference>
<dbReference type="FunFam" id="3.30.1330.50:FF:000001">
    <property type="entry name" value="2-C-methyl-D-erythritol 2,4-cyclodiphosphate synthase"/>
    <property type="match status" value="1"/>
</dbReference>
<dbReference type="Gene3D" id="3.30.1330.50">
    <property type="entry name" value="2-C-methyl-D-erythritol 2,4-cyclodiphosphate synthase"/>
    <property type="match status" value="1"/>
</dbReference>
<dbReference type="HAMAP" id="MF_00107">
    <property type="entry name" value="IspF"/>
    <property type="match status" value="1"/>
</dbReference>
<dbReference type="InterPro" id="IPR003526">
    <property type="entry name" value="MECDP_synthase"/>
</dbReference>
<dbReference type="InterPro" id="IPR020555">
    <property type="entry name" value="MECDP_synthase_CS"/>
</dbReference>
<dbReference type="InterPro" id="IPR036571">
    <property type="entry name" value="MECDP_synthase_sf"/>
</dbReference>
<dbReference type="NCBIfam" id="TIGR00151">
    <property type="entry name" value="ispF"/>
    <property type="match status" value="1"/>
</dbReference>
<dbReference type="PANTHER" id="PTHR43181">
    <property type="entry name" value="2-C-METHYL-D-ERYTHRITOL 2,4-CYCLODIPHOSPHATE SYNTHASE, CHLOROPLASTIC"/>
    <property type="match status" value="1"/>
</dbReference>
<dbReference type="PANTHER" id="PTHR43181:SF1">
    <property type="entry name" value="2-C-METHYL-D-ERYTHRITOL 2,4-CYCLODIPHOSPHATE SYNTHASE, CHLOROPLASTIC"/>
    <property type="match status" value="1"/>
</dbReference>
<dbReference type="Pfam" id="PF02542">
    <property type="entry name" value="YgbB"/>
    <property type="match status" value="1"/>
</dbReference>
<dbReference type="SUPFAM" id="SSF69765">
    <property type="entry name" value="IpsF-like"/>
    <property type="match status" value="1"/>
</dbReference>
<dbReference type="PROSITE" id="PS01350">
    <property type="entry name" value="ISPF"/>
    <property type="match status" value="1"/>
</dbReference>
<evidence type="ECO:0000255" key="1">
    <source>
        <dbReference type="HAMAP-Rule" id="MF_00107"/>
    </source>
</evidence>
<sequence>MRIGHGFDVHKFGGEGPVIIGGVSVPYEQGLIAHSDGDVALHALCDALLGAIAEGDIGRHFPDTDDKWKGADSRALLRDVYRRVKEKGLELGNADVTIIAQAPKMAPHIKHMCAAIAEDLETSLDNVNVKATTSEGLGFTGRKEGIACEAVVLLVKKSY</sequence>
<organism>
    <name type="scientific">Aliivibrio salmonicida (strain LFI1238)</name>
    <name type="common">Vibrio salmonicida (strain LFI1238)</name>
    <dbReference type="NCBI Taxonomy" id="316275"/>
    <lineage>
        <taxon>Bacteria</taxon>
        <taxon>Pseudomonadati</taxon>
        <taxon>Pseudomonadota</taxon>
        <taxon>Gammaproteobacteria</taxon>
        <taxon>Vibrionales</taxon>
        <taxon>Vibrionaceae</taxon>
        <taxon>Aliivibrio</taxon>
    </lineage>
</organism>
<feature type="chain" id="PRO_1000094238" description="2-C-methyl-D-erythritol 2,4-cyclodiphosphate synthase">
    <location>
        <begin position="1"/>
        <end position="159"/>
    </location>
</feature>
<feature type="binding site" evidence="1">
    <location>
        <begin position="8"/>
        <end position="10"/>
    </location>
    <ligand>
        <name>4-CDP-2-C-methyl-D-erythritol 2-phosphate</name>
        <dbReference type="ChEBI" id="CHEBI:57919"/>
    </ligand>
</feature>
<feature type="binding site" evidence="1">
    <location>
        <position position="8"/>
    </location>
    <ligand>
        <name>a divalent metal cation</name>
        <dbReference type="ChEBI" id="CHEBI:60240"/>
    </ligand>
</feature>
<feature type="binding site" evidence="1">
    <location>
        <position position="10"/>
    </location>
    <ligand>
        <name>a divalent metal cation</name>
        <dbReference type="ChEBI" id="CHEBI:60240"/>
    </ligand>
</feature>
<feature type="binding site" evidence="1">
    <location>
        <begin position="34"/>
        <end position="35"/>
    </location>
    <ligand>
        <name>4-CDP-2-C-methyl-D-erythritol 2-phosphate</name>
        <dbReference type="ChEBI" id="CHEBI:57919"/>
    </ligand>
</feature>
<feature type="binding site" evidence="1">
    <location>
        <position position="42"/>
    </location>
    <ligand>
        <name>a divalent metal cation</name>
        <dbReference type="ChEBI" id="CHEBI:60240"/>
    </ligand>
</feature>
<feature type="binding site" evidence="1">
    <location>
        <begin position="56"/>
        <end position="58"/>
    </location>
    <ligand>
        <name>4-CDP-2-C-methyl-D-erythritol 2-phosphate</name>
        <dbReference type="ChEBI" id="CHEBI:57919"/>
    </ligand>
</feature>
<feature type="binding site" evidence="1">
    <location>
        <begin position="61"/>
        <end position="65"/>
    </location>
    <ligand>
        <name>4-CDP-2-C-methyl-D-erythritol 2-phosphate</name>
        <dbReference type="ChEBI" id="CHEBI:57919"/>
    </ligand>
</feature>
<feature type="binding site" evidence="1">
    <location>
        <begin position="100"/>
        <end position="106"/>
    </location>
    <ligand>
        <name>4-CDP-2-C-methyl-D-erythritol 2-phosphate</name>
        <dbReference type="ChEBI" id="CHEBI:57919"/>
    </ligand>
</feature>
<feature type="binding site" evidence="1">
    <location>
        <begin position="132"/>
        <end position="135"/>
    </location>
    <ligand>
        <name>4-CDP-2-C-methyl-D-erythritol 2-phosphate</name>
        <dbReference type="ChEBI" id="CHEBI:57919"/>
    </ligand>
</feature>
<feature type="binding site" evidence="1">
    <location>
        <position position="139"/>
    </location>
    <ligand>
        <name>4-CDP-2-C-methyl-D-erythritol 2-phosphate</name>
        <dbReference type="ChEBI" id="CHEBI:57919"/>
    </ligand>
</feature>
<feature type="binding site" evidence="1">
    <location>
        <position position="142"/>
    </location>
    <ligand>
        <name>4-CDP-2-C-methyl-D-erythritol 2-phosphate</name>
        <dbReference type="ChEBI" id="CHEBI:57919"/>
    </ligand>
</feature>
<feature type="site" description="Transition state stabilizer" evidence="1">
    <location>
        <position position="34"/>
    </location>
</feature>
<feature type="site" description="Transition state stabilizer" evidence="1">
    <location>
        <position position="133"/>
    </location>
</feature>
<protein>
    <recommendedName>
        <fullName evidence="1">2-C-methyl-D-erythritol 2,4-cyclodiphosphate synthase</fullName>
        <shortName evidence="1">MECDP-synthase</shortName>
        <shortName evidence="1">MECPP-synthase</shortName>
        <shortName evidence="1">MECPS</shortName>
        <ecNumber evidence="1">4.6.1.12</ecNumber>
    </recommendedName>
</protein>
<proteinExistence type="inferred from homology"/>
<gene>
    <name evidence="1" type="primary">ispF</name>
    <name type="ordered locus">VSAL_I2511</name>
</gene>
<comment type="function">
    <text evidence="1">Involved in the biosynthesis of isopentenyl diphosphate (IPP) and dimethylallyl diphosphate (DMAPP), two major building blocks of isoprenoid compounds. Catalyzes the conversion of 4-diphosphocytidyl-2-C-methyl-D-erythritol 2-phosphate (CDP-ME2P) to 2-C-methyl-D-erythritol 2,4-cyclodiphosphate (ME-CPP) with a corresponding release of cytidine 5-monophosphate (CMP).</text>
</comment>
<comment type="catalytic activity">
    <reaction evidence="1">
        <text>4-CDP-2-C-methyl-D-erythritol 2-phosphate = 2-C-methyl-D-erythritol 2,4-cyclic diphosphate + CMP</text>
        <dbReference type="Rhea" id="RHEA:23864"/>
        <dbReference type="ChEBI" id="CHEBI:57919"/>
        <dbReference type="ChEBI" id="CHEBI:58483"/>
        <dbReference type="ChEBI" id="CHEBI:60377"/>
        <dbReference type="EC" id="4.6.1.12"/>
    </reaction>
</comment>
<comment type="cofactor">
    <cofactor evidence="1">
        <name>a divalent metal cation</name>
        <dbReference type="ChEBI" id="CHEBI:60240"/>
    </cofactor>
    <text evidence="1">Binds 1 divalent metal cation per subunit.</text>
</comment>
<comment type="pathway">
    <text evidence="1">Isoprenoid biosynthesis; isopentenyl diphosphate biosynthesis via DXP pathway; isopentenyl diphosphate from 1-deoxy-D-xylulose 5-phosphate: step 4/6.</text>
</comment>
<comment type="subunit">
    <text evidence="1">Homotrimer.</text>
</comment>
<comment type="similarity">
    <text evidence="1">Belongs to the IspF family.</text>
</comment>
<name>ISPF_ALISL</name>
<accession>B6EKL5</accession>
<keyword id="KW-0414">Isoprene biosynthesis</keyword>
<keyword id="KW-0456">Lyase</keyword>
<keyword id="KW-0479">Metal-binding</keyword>
<reference key="1">
    <citation type="journal article" date="2008" name="BMC Genomics">
        <title>The genome sequence of the fish pathogen Aliivibrio salmonicida strain LFI1238 shows extensive evidence of gene decay.</title>
        <authorList>
            <person name="Hjerde E."/>
            <person name="Lorentzen M.S."/>
            <person name="Holden M.T."/>
            <person name="Seeger K."/>
            <person name="Paulsen S."/>
            <person name="Bason N."/>
            <person name="Churcher C."/>
            <person name="Harris D."/>
            <person name="Norbertczak H."/>
            <person name="Quail M.A."/>
            <person name="Sanders S."/>
            <person name="Thurston S."/>
            <person name="Parkhill J."/>
            <person name="Willassen N.P."/>
            <person name="Thomson N.R."/>
        </authorList>
    </citation>
    <scope>NUCLEOTIDE SEQUENCE [LARGE SCALE GENOMIC DNA]</scope>
    <source>
        <strain>LFI1238</strain>
    </source>
</reference>